<sequence>MPCVFCAIIAGEAPAIRIYEDGGYLAILDIRPFTRGHTLVLPKRHTVDLTDTPPEALADMVAIGQRIARAARATKLADATHIAINDGRAAFQTVFHVHLHVLPPRNGDKLSVAKGMMLRRDPDREATGRILREALAQQDAAAQD</sequence>
<organism>
    <name type="scientific">Mycobacterium tuberculosis (strain CDC 1551 / Oshkosh)</name>
    <dbReference type="NCBI Taxonomy" id="83331"/>
    <lineage>
        <taxon>Bacteria</taxon>
        <taxon>Bacillati</taxon>
        <taxon>Actinomycetota</taxon>
        <taxon>Actinomycetes</taxon>
        <taxon>Mycobacteriales</taxon>
        <taxon>Mycobacteriaceae</taxon>
        <taxon>Mycobacterium</taxon>
        <taxon>Mycobacterium tuberculosis complex</taxon>
    </lineage>
</organism>
<name>YHI2_MYCTO</name>
<reference key="1">
    <citation type="journal article" date="2002" name="J. Bacteriol.">
        <title>Whole-genome comparison of Mycobacterium tuberculosis clinical and laboratory strains.</title>
        <authorList>
            <person name="Fleischmann R.D."/>
            <person name="Alland D."/>
            <person name="Eisen J.A."/>
            <person name="Carpenter L."/>
            <person name="White O."/>
            <person name="Peterson J.D."/>
            <person name="DeBoy R.T."/>
            <person name="Dodson R.J."/>
            <person name="Gwinn M.L."/>
            <person name="Haft D.H."/>
            <person name="Hickey E.K."/>
            <person name="Kolonay J.F."/>
            <person name="Nelson W.C."/>
            <person name="Umayam L.A."/>
            <person name="Ermolaeva M.D."/>
            <person name="Salzberg S.L."/>
            <person name="Delcher A."/>
            <person name="Utterback T.R."/>
            <person name="Weidman J.F."/>
            <person name="Khouri H.M."/>
            <person name="Gill J."/>
            <person name="Mikula A."/>
            <person name="Bishai W."/>
            <person name="Jacobs W.R. Jr."/>
            <person name="Venter J.C."/>
            <person name="Fraser C.M."/>
        </authorList>
    </citation>
    <scope>NUCLEOTIDE SEQUENCE [LARGE SCALE GENOMIC DNA]</scope>
    <source>
        <strain>CDC 1551 / Oshkosh</strain>
    </source>
</reference>
<proteinExistence type="predicted"/>
<accession>P9WML0</accession>
<accession>L0T945</accession>
<accession>Q11066</accession>
<evidence type="ECO:0000255" key="1">
    <source>
        <dbReference type="PROSITE-ProRule" id="PRU00464"/>
    </source>
</evidence>
<evidence type="ECO:0000305" key="2"/>
<protein>
    <recommendedName>
        <fullName>Uncharacterized HIT-like protein MT1300</fullName>
    </recommendedName>
</protein>
<gene>
    <name type="ordered locus">MT1300</name>
</gene>
<dbReference type="EMBL" id="AE000516">
    <property type="protein sequence ID" value="AAK45559.1"/>
    <property type="status" value="ALT_INIT"/>
    <property type="molecule type" value="Genomic_DNA"/>
</dbReference>
<dbReference type="PIR" id="F70753">
    <property type="entry name" value="F70753"/>
</dbReference>
<dbReference type="RefSeq" id="WP_003898798.1">
    <property type="nucleotide sequence ID" value="NZ_KK341227.1"/>
</dbReference>
<dbReference type="SMR" id="P9WML0"/>
<dbReference type="KEGG" id="mtc:MT1300"/>
<dbReference type="PATRIC" id="fig|83331.31.peg.1404"/>
<dbReference type="HOGENOM" id="CLU_056776_3_3_11"/>
<dbReference type="Proteomes" id="UP000001020">
    <property type="component" value="Chromosome"/>
</dbReference>
<dbReference type="GO" id="GO:0003824">
    <property type="term" value="F:catalytic activity"/>
    <property type="evidence" value="ECO:0007669"/>
    <property type="project" value="InterPro"/>
</dbReference>
<dbReference type="GO" id="GO:0009117">
    <property type="term" value="P:nucleotide metabolic process"/>
    <property type="evidence" value="ECO:0007669"/>
    <property type="project" value="TreeGrafter"/>
</dbReference>
<dbReference type="CDD" id="cd01277">
    <property type="entry name" value="HINT_subgroup"/>
    <property type="match status" value="1"/>
</dbReference>
<dbReference type="Gene3D" id="3.30.428.10">
    <property type="entry name" value="HIT-like"/>
    <property type="match status" value="1"/>
</dbReference>
<dbReference type="InterPro" id="IPR039384">
    <property type="entry name" value="HINT"/>
</dbReference>
<dbReference type="InterPro" id="IPR019808">
    <property type="entry name" value="Histidine_triad_CS"/>
</dbReference>
<dbReference type="InterPro" id="IPR001310">
    <property type="entry name" value="Histidine_triad_HIT"/>
</dbReference>
<dbReference type="InterPro" id="IPR011146">
    <property type="entry name" value="HIT-like"/>
</dbReference>
<dbReference type="InterPro" id="IPR036265">
    <property type="entry name" value="HIT-like_sf"/>
</dbReference>
<dbReference type="PANTHER" id="PTHR46648:SF1">
    <property type="entry name" value="ADENOSINE 5'-MONOPHOSPHORAMIDASE HNT1"/>
    <property type="match status" value="1"/>
</dbReference>
<dbReference type="PANTHER" id="PTHR46648">
    <property type="entry name" value="HIT FAMILY PROTEIN 1"/>
    <property type="match status" value="1"/>
</dbReference>
<dbReference type="Pfam" id="PF01230">
    <property type="entry name" value="HIT"/>
    <property type="match status" value="1"/>
</dbReference>
<dbReference type="PRINTS" id="PR00332">
    <property type="entry name" value="HISTRIAD"/>
</dbReference>
<dbReference type="SUPFAM" id="SSF54197">
    <property type="entry name" value="HIT-like"/>
    <property type="match status" value="1"/>
</dbReference>
<dbReference type="PROSITE" id="PS00892">
    <property type="entry name" value="HIT_1"/>
    <property type="match status" value="1"/>
</dbReference>
<dbReference type="PROSITE" id="PS51084">
    <property type="entry name" value="HIT_2"/>
    <property type="match status" value="1"/>
</dbReference>
<feature type="chain" id="PRO_0000427285" description="Uncharacterized HIT-like protein MT1300">
    <location>
        <begin position="1"/>
        <end position="144"/>
    </location>
</feature>
<feature type="domain" description="HIT" evidence="1">
    <location>
        <begin position="4"/>
        <end position="111"/>
    </location>
</feature>
<feature type="short sequence motif" description="Histidine triad motif">
    <location>
        <begin position="96"/>
        <end position="100"/>
    </location>
</feature>
<comment type="sequence caution" evidence="2">
    <conflict type="erroneous initiation">
        <sequence resource="EMBL-CDS" id="AAK45559"/>
    </conflict>
</comment>
<keyword id="KW-1185">Reference proteome</keyword>